<reference key="1">
    <citation type="journal article" date="1992" name="J. Bacteriol.">
        <title>Nucleotide sequences and genetic analysis of hydrogen oxidation (hox) genes in Azotobacter vinelandii.</title>
        <authorList>
            <person name="Menon A."/>
            <person name="Mortenson L.E."/>
            <person name="Robson R.L."/>
        </authorList>
    </citation>
    <scope>NUCLEOTIDE SEQUENCE [GENOMIC DNA]</scope>
    <source>
        <strain>ATCC 13705 / OP1 / DSM 366 / NCIMB 11614 / LMG 3878 / UW</strain>
    </source>
</reference>
<accession>P40594</accession>
<comment type="similarity">
    <text evidence="2">Belongs to the HupH/HyaF family.</text>
</comment>
<protein>
    <recommendedName>
        <fullName>Hydrogenase expression/formation protein HoxQ</fullName>
    </recommendedName>
</protein>
<sequence length="283" mass="31070">MNDDLPILPPGFGPGSHGEEERPDCPSMPRAMRRFERPALPEPGQLSGHPIALALLERLQEALGAYRIGEQSRVIGLDRQPKADLKLLQQILGEGEVAIQVGGQRPARIQETVLAGVWWVQLQIGRGEVVGQWLEVADVPALVRRRAFAETRWPQLGELPDGLLNAGPVLVELLDAAKRHAERALATPHAVNLSLLPFSPEDRRFLAERLGEGSVTLLSRGYGNCRIASTATPGIWCVQYFNSSDRLILDTLEVTGIPQVACAAQEDIDDSAERLREIREALE</sequence>
<organism>
    <name type="scientific">Azotobacter vinelandii</name>
    <dbReference type="NCBI Taxonomy" id="354"/>
    <lineage>
        <taxon>Bacteria</taxon>
        <taxon>Pseudomonadati</taxon>
        <taxon>Pseudomonadota</taxon>
        <taxon>Gammaproteobacteria</taxon>
        <taxon>Pseudomonadales</taxon>
        <taxon>Pseudomonadaceae</taxon>
        <taxon>Azotobacter</taxon>
    </lineage>
</organism>
<feature type="chain" id="PRO_0000201417" description="Hydrogenase expression/formation protein HoxQ">
    <location>
        <begin position="1"/>
        <end position="283"/>
    </location>
</feature>
<feature type="region of interest" description="Disordered" evidence="1">
    <location>
        <begin position="1"/>
        <end position="29"/>
    </location>
</feature>
<proteinExistence type="inferred from homology"/>
<gene>
    <name type="primary">hoxQ</name>
</gene>
<name>HOXQ_AZOVI</name>
<dbReference type="EMBL" id="L23970">
    <property type="protein sequence ID" value="AAA19504.1"/>
    <property type="molecule type" value="Unassigned_DNA"/>
</dbReference>
<dbReference type="SMR" id="P40594"/>
<dbReference type="Gene3D" id="3.30.1370.140">
    <property type="entry name" value="HupH hydrogenase expression protein, C-terminal domain"/>
    <property type="match status" value="2"/>
</dbReference>
<dbReference type="InterPro" id="IPR038527">
    <property type="entry name" value="HupH_C_sf"/>
</dbReference>
<dbReference type="InterPro" id="IPR006894">
    <property type="entry name" value="HupH_Hydgase_express_prot_C"/>
</dbReference>
<dbReference type="Pfam" id="PF04809">
    <property type="entry name" value="HupH_C"/>
    <property type="match status" value="2"/>
</dbReference>
<evidence type="ECO:0000256" key="1">
    <source>
        <dbReference type="SAM" id="MobiDB-lite"/>
    </source>
</evidence>
<evidence type="ECO:0000305" key="2"/>